<reference key="1">
    <citation type="submission" date="2007-08" db="EMBL/GenBank/DDBJ databases">
        <title>Complete sequence of Shewanella sediminis HAW-EB3.</title>
        <authorList>
            <consortium name="US DOE Joint Genome Institute"/>
            <person name="Copeland A."/>
            <person name="Lucas S."/>
            <person name="Lapidus A."/>
            <person name="Barry K."/>
            <person name="Glavina del Rio T."/>
            <person name="Dalin E."/>
            <person name="Tice H."/>
            <person name="Pitluck S."/>
            <person name="Chertkov O."/>
            <person name="Brettin T."/>
            <person name="Bruce D."/>
            <person name="Detter J.C."/>
            <person name="Han C."/>
            <person name="Schmutz J."/>
            <person name="Larimer F."/>
            <person name="Land M."/>
            <person name="Hauser L."/>
            <person name="Kyrpides N."/>
            <person name="Kim E."/>
            <person name="Zhao J.-S."/>
            <person name="Richardson P."/>
        </authorList>
    </citation>
    <scope>NUCLEOTIDE SEQUENCE [LARGE SCALE GENOMIC DNA]</scope>
    <source>
        <strain>HAW-EB3</strain>
    </source>
</reference>
<comment type="function">
    <text evidence="1">Binds directly to 16S ribosomal RNA.</text>
</comment>
<comment type="similarity">
    <text evidence="1">Belongs to the bacterial ribosomal protein bS20 family.</text>
</comment>
<accession>A8FSH9</accession>
<sequence length="88" mass="9723">MANSKSAKKRALQSEKRRQHNASRRSMLRSYVKKVIAAINAGDHKAATEAFNAAQPIVDRMATKGLIHKNKAARQKSRLNTKIKALAA</sequence>
<keyword id="KW-1185">Reference proteome</keyword>
<keyword id="KW-0687">Ribonucleoprotein</keyword>
<keyword id="KW-0689">Ribosomal protein</keyword>
<keyword id="KW-0694">RNA-binding</keyword>
<keyword id="KW-0699">rRNA-binding</keyword>
<organism>
    <name type="scientific">Shewanella sediminis (strain HAW-EB3)</name>
    <dbReference type="NCBI Taxonomy" id="425104"/>
    <lineage>
        <taxon>Bacteria</taxon>
        <taxon>Pseudomonadati</taxon>
        <taxon>Pseudomonadota</taxon>
        <taxon>Gammaproteobacteria</taxon>
        <taxon>Alteromonadales</taxon>
        <taxon>Shewanellaceae</taxon>
        <taxon>Shewanella</taxon>
    </lineage>
</organism>
<gene>
    <name evidence="1" type="primary">rpsT</name>
    <name type="ordered locus">Ssed_1191</name>
</gene>
<proteinExistence type="inferred from homology"/>
<feature type="chain" id="PRO_1000081451" description="Small ribosomal subunit protein bS20">
    <location>
        <begin position="1"/>
        <end position="88"/>
    </location>
</feature>
<feature type="region of interest" description="Disordered" evidence="2">
    <location>
        <begin position="1"/>
        <end position="27"/>
    </location>
</feature>
<dbReference type="EMBL" id="CP000821">
    <property type="protein sequence ID" value="ABV35802.1"/>
    <property type="molecule type" value="Genomic_DNA"/>
</dbReference>
<dbReference type="RefSeq" id="WP_012141538.1">
    <property type="nucleotide sequence ID" value="NC_009831.1"/>
</dbReference>
<dbReference type="SMR" id="A8FSH9"/>
<dbReference type="STRING" id="425104.Ssed_1191"/>
<dbReference type="KEGG" id="sse:Ssed_1191"/>
<dbReference type="eggNOG" id="COG0268">
    <property type="taxonomic scope" value="Bacteria"/>
</dbReference>
<dbReference type="HOGENOM" id="CLU_160655_4_0_6"/>
<dbReference type="OrthoDB" id="9807974at2"/>
<dbReference type="Proteomes" id="UP000002015">
    <property type="component" value="Chromosome"/>
</dbReference>
<dbReference type="GO" id="GO:0005829">
    <property type="term" value="C:cytosol"/>
    <property type="evidence" value="ECO:0007669"/>
    <property type="project" value="TreeGrafter"/>
</dbReference>
<dbReference type="GO" id="GO:0015935">
    <property type="term" value="C:small ribosomal subunit"/>
    <property type="evidence" value="ECO:0007669"/>
    <property type="project" value="TreeGrafter"/>
</dbReference>
<dbReference type="GO" id="GO:0070181">
    <property type="term" value="F:small ribosomal subunit rRNA binding"/>
    <property type="evidence" value="ECO:0007669"/>
    <property type="project" value="TreeGrafter"/>
</dbReference>
<dbReference type="GO" id="GO:0003735">
    <property type="term" value="F:structural constituent of ribosome"/>
    <property type="evidence" value="ECO:0007669"/>
    <property type="project" value="InterPro"/>
</dbReference>
<dbReference type="GO" id="GO:0006412">
    <property type="term" value="P:translation"/>
    <property type="evidence" value="ECO:0007669"/>
    <property type="project" value="UniProtKB-UniRule"/>
</dbReference>
<dbReference type="FunFam" id="1.20.58.110:FF:000001">
    <property type="entry name" value="30S ribosomal protein S20"/>
    <property type="match status" value="1"/>
</dbReference>
<dbReference type="Gene3D" id="1.20.58.110">
    <property type="entry name" value="Ribosomal protein S20"/>
    <property type="match status" value="1"/>
</dbReference>
<dbReference type="HAMAP" id="MF_00500">
    <property type="entry name" value="Ribosomal_bS20"/>
    <property type="match status" value="1"/>
</dbReference>
<dbReference type="InterPro" id="IPR002583">
    <property type="entry name" value="Ribosomal_bS20"/>
</dbReference>
<dbReference type="InterPro" id="IPR036510">
    <property type="entry name" value="Ribosomal_bS20_sf"/>
</dbReference>
<dbReference type="NCBIfam" id="TIGR00029">
    <property type="entry name" value="S20"/>
    <property type="match status" value="1"/>
</dbReference>
<dbReference type="PANTHER" id="PTHR33398">
    <property type="entry name" value="30S RIBOSOMAL PROTEIN S20"/>
    <property type="match status" value="1"/>
</dbReference>
<dbReference type="PANTHER" id="PTHR33398:SF1">
    <property type="entry name" value="SMALL RIBOSOMAL SUBUNIT PROTEIN BS20C"/>
    <property type="match status" value="1"/>
</dbReference>
<dbReference type="Pfam" id="PF01649">
    <property type="entry name" value="Ribosomal_S20p"/>
    <property type="match status" value="1"/>
</dbReference>
<dbReference type="SUPFAM" id="SSF46992">
    <property type="entry name" value="Ribosomal protein S20"/>
    <property type="match status" value="1"/>
</dbReference>
<name>RS20_SHESH</name>
<evidence type="ECO:0000255" key="1">
    <source>
        <dbReference type="HAMAP-Rule" id="MF_00500"/>
    </source>
</evidence>
<evidence type="ECO:0000256" key="2">
    <source>
        <dbReference type="SAM" id="MobiDB-lite"/>
    </source>
</evidence>
<evidence type="ECO:0000305" key="3"/>
<protein>
    <recommendedName>
        <fullName evidence="1">Small ribosomal subunit protein bS20</fullName>
    </recommendedName>
    <alternativeName>
        <fullName evidence="3">30S ribosomal protein S20</fullName>
    </alternativeName>
</protein>